<reference key="1">
    <citation type="submission" date="2008-06" db="EMBL/GenBank/DDBJ databases">
        <title>Complete sequence of Chlorobaculum parvum NCIB 8327.</title>
        <authorList>
            <consortium name="US DOE Joint Genome Institute"/>
            <person name="Lucas S."/>
            <person name="Copeland A."/>
            <person name="Lapidus A."/>
            <person name="Glavina del Rio T."/>
            <person name="Dalin E."/>
            <person name="Tice H."/>
            <person name="Bruce D."/>
            <person name="Goodwin L."/>
            <person name="Pitluck S."/>
            <person name="Schmutz J."/>
            <person name="Larimer F."/>
            <person name="Land M."/>
            <person name="Hauser L."/>
            <person name="Kyrpides N."/>
            <person name="Mikhailova N."/>
            <person name="Zhao F."/>
            <person name="Li T."/>
            <person name="Liu Z."/>
            <person name="Overmann J."/>
            <person name="Bryant D.A."/>
            <person name="Richardson P."/>
        </authorList>
    </citation>
    <scope>NUCLEOTIDE SEQUENCE [LARGE SCALE GENOMIC DNA]</scope>
    <source>
        <strain>DSM 263 / NCIMB 8327</strain>
    </source>
</reference>
<keyword id="KW-0963">Cytoplasm</keyword>
<keyword id="KW-0489">Methyltransferase</keyword>
<keyword id="KW-0698">rRNA processing</keyword>
<keyword id="KW-0949">S-adenosyl-L-methionine</keyword>
<keyword id="KW-0808">Transferase</keyword>
<accession>B3QLX2</accession>
<gene>
    <name evidence="1" type="primary">rsmH</name>
    <name type="synonym">mraW</name>
    <name type="ordered locus">Cpar_2072</name>
</gene>
<feature type="chain" id="PRO_0000386797" description="Ribosomal RNA small subunit methyltransferase H">
    <location>
        <begin position="1"/>
        <end position="318"/>
    </location>
</feature>
<feature type="binding site" evidence="1">
    <location>
        <begin position="34"/>
        <end position="36"/>
    </location>
    <ligand>
        <name>S-adenosyl-L-methionine</name>
        <dbReference type="ChEBI" id="CHEBI:59789"/>
    </ligand>
</feature>
<feature type="binding site" evidence="1">
    <location>
        <position position="57"/>
    </location>
    <ligand>
        <name>S-adenosyl-L-methionine</name>
        <dbReference type="ChEBI" id="CHEBI:59789"/>
    </ligand>
</feature>
<feature type="binding site" evidence="1">
    <location>
        <position position="91"/>
    </location>
    <ligand>
        <name>S-adenosyl-L-methionine</name>
        <dbReference type="ChEBI" id="CHEBI:59789"/>
    </ligand>
</feature>
<feature type="binding site" evidence="1">
    <location>
        <position position="110"/>
    </location>
    <ligand>
        <name>S-adenosyl-L-methionine</name>
        <dbReference type="ChEBI" id="CHEBI:59789"/>
    </ligand>
</feature>
<feature type="binding site" evidence="1">
    <location>
        <position position="117"/>
    </location>
    <ligand>
        <name>S-adenosyl-L-methionine</name>
        <dbReference type="ChEBI" id="CHEBI:59789"/>
    </ligand>
</feature>
<proteinExistence type="inferred from homology"/>
<sequence length="318" mass="34649">MGNQEYHEPVLADATTSLLVTRPGIYIDGTLGGGGHSLELLRRLDALDGESLLVGIDQDSYALEAAGQKLQDFGDKAILLRGNFSMVRELLAPVKRGPGEGLEVMGLLLDLGVSSFQIDTPVRGFSYLRDGPLDMRMDPDGPLTAADIVNDYEEQALARLFFRYGEEAHGGRIARAVVSARSVAPITTTGGLAEVVRRACPRKDSPIKTLSRIYQALRIEVNDELGVLQQALEDGFAVLSPGGRFAVISYHSLEDRIVKRFFSARCTADWGPKGLPLREPLKPAEAELVTRKSVQAGEAEVSRNPRARSARLRVIQKL</sequence>
<comment type="function">
    <text evidence="1">Specifically methylates the N4 position of cytidine in position 1402 (C1402) of 16S rRNA.</text>
</comment>
<comment type="catalytic activity">
    <reaction evidence="1">
        <text>cytidine(1402) in 16S rRNA + S-adenosyl-L-methionine = N(4)-methylcytidine(1402) in 16S rRNA + S-adenosyl-L-homocysteine + H(+)</text>
        <dbReference type="Rhea" id="RHEA:42928"/>
        <dbReference type="Rhea" id="RHEA-COMP:10286"/>
        <dbReference type="Rhea" id="RHEA-COMP:10287"/>
        <dbReference type="ChEBI" id="CHEBI:15378"/>
        <dbReference type="ChEBI" id="CHEBI:57856"/>
        <dbReference type="ChEBI" id="CHEBI:59789"/>
        <dbReference type="ChEBI" id="CHEBI:74506"/>
        <dbReference type="ChEBI" id="CHEBI:82748"/>
        <dbReference type="EC" id="2.1.1.199"/>
    </reaction>
</comment>
<comment type="subcellular location">
    <subcellularLocation>
        <location evidence="1">Cytoplasm</location>
    </subcellularLocation>
</comment>
<comment type="similarity">
    <text evidence="1">Belongs to the methyltransferase superfamily. RsmH family.</text>
</comment>
<evidence type="ECO:0000255" key="1">
    <source>
        <dbReference type="HAMAP-Rule" id="MF_01007"/>
    </source>
</evidence>
<name>RSMH_CHLP8</name>
<organism>
    <name type="scientific">Chlorobaculum parvum (strain DSM 263 / NCIMB 8327)</name>
    <name type="common">Chlorobium vibrioforme subsp. thiosulfatophilum</name>
    <dbReference type="NCBI Taxonomy" id="517417"/>
    <lineage>
        <taxon>Bacteria</taxon>
        <taxon>Pseudomonadati</taxon>
        <taxon>Chlorobiota</taxon>
        <taxon>Chlorobiia</taxon>
        <taxon>Chlorobiales</taxon>
        <taxon>Chlorobiaceae</taxon>
        <taxon>Chlorobaculum</taxon>
    </lineage>
</organism>
<protein>
    <recommendedName>
        <fullName evidence="1">Ribosomal RNA small subunit methyltransferase H</fullName>
        <ecNumber evidence="1">2.1.1.199</ecNumber>
    </recommendedName>
    <alternativeName>
        <fullName evidence="1">16S rRNA m(4)C1402 methyltransferase</fullName>
    </alternativeName>
    <alternativeName>
        <fullName evidence="1">rRNA (cytosine-N(4)-)-methyltransferase RsmH</fullName>
    </alternativeName>
</protein>
<dbReference type="EC" id="2.1.1.199" evidence="1"/>
<dbReference type="EMBL" id="CP001099">
    <property type="protein sequence ID" value="ACF12458.1"/>
    <property type="molecule type" value="Genomic_DNA"/>
</dbReference>
<dbReference type="RefSeq" id="WP_012503291.1">
    <property type="nucleotide sequence ID" value="NC_011027.1"/>
</dbReference>
<dbReference type="SMR" id="B3QLX2"/>
<dbReference type="STRING" id="517417.Cpar_2072"/>
<dbReference type="KEGG" id="cpc:Cpar_2072"/>
<dbReference type="eggNOG" id="COG0275">
    <property type="taxonomic scope" value="Bacteria"/>
</dbReference>
<dbReference type="HOGENOM" id="CLU_038422_2_0_10"/>
<dbReference type="OrthoDB" id="9806637at2"/>
<dbReference type="Proteomes" id="UP000008811">
    <property type="component" value="Chromosome"/>
</dbReference>
<dbReference type="GO" id="GO:0005737">
    <property type="term" value="C:cytoplasm"/>
    <property type="evidence" value="ECO:0007669"/>
    <property type="project" value="UniProtKB-SubCell"/>
</dbReference>
<dbReference type="GO" id="GO:0071424">
    <property type="term" value="F:rRNA (cytosine-N4-)-methyltransferase activity"/>
    <property type="evidence" value="ECO:0007669"/>
    <property type="project" value="UniProtKB-UniRule"/>
</dbReference>
<dbReference type="GO" id="GO:0070475">
    <property type="term" value="P:rRNA base methylation"/>
    <property type="evidence" value="ECO:0007669"/>
    <property type="project" value="UniProtKB-UniRule"/>
</dbReference>
<dbReference type="Gene3D" id="1.10.150.170">
    <property type="entry name" value="Putative methyltransferase TM0872, insert domain"/>
    <property type="match status" value="1"/>
</dbReference>
<dbReference type="Gene3D" id="3.40.50.150">
    <property type="entry name" value="Vaccinia Virus protein VP39"/>
    <property type="match status" value="1"/>
</dbReference>
<dbReference type="HAMAP" id="MF_01007">
    <property type="entry name" value="16SrRNA_methyltr_H"/>
    <property type="match status" value="1"/>
</dbReference>
<dbReference type="InterPro" id="IPR002903">
    <property type="entry name" value="RsmH"/>
</dbReference>
<dbReference type="InterPro" id="IPR023397">
    <property type="entry name" value="SAM-dep_MeTrfase_MraW_recog"/>
</dbReference>
<dbReference type="InterPro" id="IPR029063">
    <property type="entry name" value="SAM-dependent_MTases_sf"/>
</dbReference>
<dbReference type="NCBIfam" id="TIGR00006">
    <property type="entry name" value="16S rRNA (cytosine(1402)-N(4))-methyltransferase RsmH"/>
    <property type="match status" value="1"/>
</dbReference>
<dbReference type="PANTHER" id="PTHR11265:SF0">
    <property type="entry name" value="12S RRNA N4-METHYLCYTIDINE METHYLTRANSFERASE"/>
    <property type="match status" value="1"/>
</dbReference>
<dbReference type="PANTHER" id="PTHR11265">
    <property type="entry name" value="S-ADENOSYL-METHYLTRANSFERASE MRAW"/>
    <property type="match status" value="1"/>
</dbReference>
<dbReference type="Pfam" id="PF01795">
    <property type="entry name" value="Methyltransf_5"/>
    <property type="match status" value="1"/>
</dbReference>
<dbReference type="PIRSF" id="PIRSF004486">
    <property type="entry name" value="MraW"/>
    <property type="match status" value="1"/>
</dbReference>
<dbReference type="SUPFAM" id="SSF81799">
    <property type="entry name" value="Putative methyltransferase TM0872, insert domain"/>
    <property type="match status" value="1"/>
</dbReference>
<dbReference type="SUPFAM" id="SSF53335">
    <property type="entry name" value="S-adenosyl-L-methionine-dependent methyltransferases"/>
    <property type="match status" value="1"/>
</dbReference>